<dbReference type="EC" id="3.6.5.-" evidence="1"/>
<dbReference type="EMBL" id="AM180355">
    <property type="protein sequence ID" value="CAJ68017.1"/>
    <property type="molecule type" value="Genomic_DNA"/>
</dbReference>
<dbReference type="RefSeq" id="YP_001087656.1">
    <property type="nucleotide sequence ID" value="NC_009089.1"/>
</dbReference>
<dbReference type="SMR" id="Q18B27"/>
<dbReference type="STRING" id="272563.CD630_11640"/>
<dbReference type="EnsemblBacteria" id="CAJ68017">
    <property type="protein sequence ID" value="CAJ68017"/>
    <property type="gene ID" value="CD630_11640"/>
</dbReference>
<dbReference type="KEGG" id="cdf:CD630_11640"/>
<dbReference type="KEGG" id="pdc:CDIF630_01311"/>
<dbReference type="PATRIC" id="fig|272563.120.peg.1214"/>
<dbReference type="eggNOG" id="COG0536">
    <property type="taxonomic scope" value="Bacteria"/>
</dbReference>
<dbReference type="OrthoDB" id="9807318at2"/>
<dbReference type="PhylomeDB" id="Q18B27"/>
<dbReference type="BioCyc" id="PDIF272563:G12WB-1294-MONOMER"/>
<dbReference type="Proteomes" id="UP000001978">
    <property type="component" value="Chromosome"/>
</dbReference>
<dbReference type="GO" id="GO:0005737">
    <property type="term" value="C:cytoplasm"/>
    <property type="evidence" value="ECO:0007669"/>
    <property type="project" value="UniProtKB-SubCell"/>
</dbReference>
<dbReference type="GO" id="GO:0005525">
    <property type="term" value="F:GTP binding"/>
    <property type="evidence" value="ECO:0007669"/>
    <property type="project" value="UniProtKB-UniRule"/>
</dbReference>
<dbReference type="GO" id="GO:0003924">
    <property type="term" value="F:GTPase activity"/>
    <property type="evidence" value="ECO:0007669"/>
    <property type="project" value="UniProtKB-UniRule"/>
</dbReference>
<dbReference type="GO" id="GO:0000287">
    <property type="term" value="F:magnesium ion binding"/>
    <property type="evidence" value="ECO:0007669"/>
    <property type="project" value="InterPro"/>
</dbReference>
<dbReference type="GO" id="GO:0042254">
    <property type="term" value="P:ribosome biogenesis"/>
    <property type="evidence" value="ECO:0007669"/>
    <property type="project" value="UniProtKB-UniRule"/>
</dbReference>
<dbReference type="CDD" id="cd01898">
    <property type="entry name" value="Obg"/>
    <property type="match status" value="1"/>
</dbReference>
<dbReference type="FunFam" id="2.70.210.12:FF:000001">
    <property type="entry name" value="GTPase Obg"/>
    <property type="match status" value="1"/>
</dbReference>
<dbReference type="Gene3D" id="3.30.300.350">
    <property type="entry name" value="GTP-binding protein OBG, C-terminal domain"/>
    <property type="match status" value="1"/>
</dbReference>
<dbReference type="Gene3D" id="2.70.210.12">
    <property type="entry name" value="GTP1/OBG domain"/>
    <property type="match status" value="1"/>
</dbReference>
<dbReference type="Gene3D" id="3.40.50.300">
    <property type="entry name" value="P-loop containing nucleotide triphosphate hydrolases"/>
    <property type="match status" value="1"/>
</dbReference>
<dbReference type="HAMAP" id="MF_01454">
    <property type="entry name" value="GTPase_Obg"/>
    <property type="match status" value="1"/>
</dbReference>
<dbReference type="InterPro" id="IPR031167">
    <property type="entry name" value="G_OBG"/>
</dbReference>
<dbReference type="InterPro" id="IPR006073">
    <property type="entry name" value="GTP-bd"/>
</dbReference>
<dbReference type="InterPro" id="IPR014100">
    <property type="entry name" value="GTP-bd_Obg/CgtA"/>
</dbReference>
<dbReference type="InterPro" id="IPR036346">
    <property type="entry name" value="GTP-bd_prot_GTP1/OBG_C_sf"/>
</dbReference>
<dbReference type="InterPro" id="IPR006074">
    <property type="entry name" value="GTP1-OBG_CS"/>
</dbReference>
<dbReference type="InterPro" id="IPR006169">
    <property type="entry name" value="GTP1_OBG_dom"/>
</dbReference>
<dbReference type="InterPro" id="IPR036726">
    <property type="entry name" value="GTP1_OBG_dom_sf"/>
</dbReference>
<dbReference type="InterPro" id="IPR045086">
    <property type="entry name" value="OBG_GTPase"/>
</dbReference>
<dbReference type="InterPro" id="IPR015349">
    <property type="entry name" value="OCT_dom"/>
</dbReference>
<dbReference type="InterPro" id="IPR027417">
    <property type="entry name" value="P-loop_NTPase"/>
</dbReference>
<dbReference type="NCBIfam" id="TIGR02729">
    <property type="entry name" value="Obg_CgtA"/>
    <property type="match status" value="1"/>
</dbReference>
<dbReference type="NCBIfam" id="TIGR03595">
    <property type="entry name" value="Obg_CgtA_exten"/>
    <property type="match status" value="1"/>
</dbReference>
<dbReference type="NCBIfam" id="NF008954">
    <property type="entry name" value="PRK12296.1"/>
    <property type="match status" value="1"/>
</dbReference>
<dbReference type="NCBIfam" id="NF008955">
    <property type="entry name" value="PRK12297.1"/>
    <property type="match status" value="1"/>
</dbReference>
<dbReference type="NCBIfam" id="NF008956">
    <property type="entry name" value="PRK12299.1"/>
    <property type="match status" value="1"/>
</dbReference>
<dbReference type="PANTHER" id="PTHR11702">
    <property type="entry name" value="DEVELOPMENTALLY REGULATED GTP-BINDING PROTEIN-RELATED"/>
    <property type="match status" value="1"/>
</dbReference>
<dbReference type="PANTHER" id="PTHR11702:SF31">
    <property type="entry name" value="MITOCHONDRIAL RIBOSOME-ASSOCIATED GTPASE 2"/>
    <property type="match status" value="1"/>
</dbReference>
<dbReference type="Pfam" id="PF09269">
    <property type="entry name" value="DUF1967"/>
    <property type="match status" value="1"/>
</dbReference>
<dbReference type="Pfam" id="PF01018">
    <property type="entry name" value="GTP1_OBG"/>
    <property type="match status" value="1"/>
</dbReference>
<dbReference type="Pfam" id="PF01926">
    <property type="entry name" value="MMR_HSR1"/>
    <property type="match status" value="1"/>
</dbReference>
<dbReference type="PIRSF" id="PIRSF002401">
    <property type="entry name" value="GTP_bd_Obg/CgtA"/>
    <property type="match status" value="1"/>
</dbReference>
<dbReference type="PRINTS" id="PR00326">
    <property type="entry name" value="GTP1OBG"/>
</dbReference>
<dbReference type="SUPFAM" id="SSF102741">
    <property type="entry name" value="Obg GTP-binding protein C-terminal domain"/>
    <property type="match status" value="1"/>
</dbReference>
<dbReference type="SUPFAM" id="SSF82051">
    <property type="entry name" value="Obg GTP-binding protein N-terminal domain"/>
    <property type="match status" value="1"/>
</dbReference>
<dbReference type="SUPFAM" id="SSF52540">
    <property type="entry name" value="P-loop containing nucleoside triphosphate hydrolases"/>
    <property type="match status" value="1"/>
</dbReference>
<dbReference type="PROSITE" id="PS51710">
    <property type="entry name" value="G_OBG"/>
    <property type="match status" value="1"/>
</dbReference>
<dbReference type="PROSITE" id="PS00905">
    <property type="entry name" value="GTP1_OBG"/>
    <property type="match status" value="1"/>
</dbReference>
<dbReference type="PROSITE" id="PS51883">
    <property type="entry name" value="OBG"/>
    <property type="match status" value="1"/>
</dbReference>
<dbReference type="PROSITE" id="PS51881">
    <property type="entry name" value="OCT"/>
    <property type="match status" value="1"/>
</dbReference>
<sequence length="425" mass="46883">MFIDKARIFVKAGNGGNGSVAFRREKYVPAGGPDGGDGGRGASIIFEVDLGLRTLMDFKYQKKYQAQNGGDGSKGKRAGKNGENLVLKVPAGTVIRDEATGLVLADLKKEGDTAIVAKGGIGGKGNQHFANAVRQAPAFAKSGTDGEERWITLELKMIADVGLLGFPNVGKSTFLSVVTKAKPKIANYHFTTLTPNLGVVQTKFGDSFVLADIPGIIEGASEGIGLGHEFLRHVERTKVLIHIVDISGLEGRDPIEDFDKINDELKLYNEKLSKRPQVVVANKFDILEDESKFEKFKSELEGRGYTVFKMSAATRQGIDEVIAYVSKMLKEVEDVELVSEEEMYRPELDIGTEEELSIDIEDGVYVVTGKALRRIMYSVNFDDMESLQYFQKAMESQGVFDRLREMGIEDGDVVKIYELEFEFYN</sequence>
<proteinExistence type="inferred from homology"/>
<organism>
    <name type="scientific">Clostridioides difficile (strain 630)</name>
    <name type="common">Peptoclostridium difficile</name>
    <dbReference type="NCBI Taxonomy" id="272563"/>
    <lineage>
        <taxon>Bacteria</taxon>
        <taxon>Bacillati</taxon>
        <taxon>Bacillota</taxon>
        <taxon>Clostridia</taxon>
        <taxon>Peptostreptococcales</taxon>
        <taxon>Peptostreptococcaceae</taxon>
        <taxon>Clostridioides</taxon>
    </lineage>
</organism>
<reference key="1">
    <citation type="journal article" date="2006" name="Nat. Genet.">
        <title>The multidrug-resistant human pathogen Clostridium difficile has a highly mobile, mosaic genome.</title>
        <authorList>
            <person name="Sebaihia M."/>
            <person name="Wren B.W."/>
            <person name="Mullany P."/>
            <person name="Fairweather N.F."/>
            <person name="Minton N."/>
            <person name="Stabler R."/>
            <person name="Thomson N.R."/>
            <person name="Roberts A.P."/>
            <person name="Cerdeno-Tarraga A.M."/>
            <person name="Wang H."/>
            <person name="Holden M.T.G."/>
            <person name="Wright A."/>
            <person name="Churcher C."/>
            <person name="Quail M.A."/>
            <person name="Baker S."/>
            <person name="Bason N."/>
            <person name="Brooks K."/>
            <person name="Chillingworth T."/>
            <person name="Cronin A."/>
            <person name="Davis P."/>
            <person name="Dowd L."/>
            <person name="Fraser A."/>
            <person name="Feltwell T."/>
            <person name="Hance Z."/>
            <person name="Holroyd S."/>
            <person name="Jagels K."/>
            <person name="Moule S."/>
            <person name="Mungall K."/>
            <person name="Price C."/>
            <person name="Rabbinowitsch E."/>
            <person name="Sharp S."/>
            <person name="Simmonds M."/>
            <person name="Stevens K."/>
            <person name="Unwin L."/>
            <person name="Whithead S."/>
            <person name="Dupuy B."/>
            <person name="Dougan G."/>
            <person name="Barrell B."/>
            <person name="Parkhill J."/>
        </authorList>
    </citation>
    <scope>NUCLEOTIDE SEQUENCE [LARGE SCALE GENOMIC DNA]</scope>
    <source>
        <strain>630</strain>
    </source>
</reference>
<accession>Q18B27</accession>
<protein>
    <recommendedName>
        <fullName evidence="1">GTPase Obg</fullName>
        <ecNumber evidence="1">3.6.5.-</ecNumber>
    </recommendedName>
    <alternativeName>
        <fullName evidence="1">GTP-binding protein Obg</fullName>
    </alternativeName>
</protein>
<comment type="function">
    <text evidence="1">An essential GTPase which binds GTP, GDP and possibly (p)ppGpp with moderate affinity, with high nucleotide exchange rates and a fairly low GTP hydrolysis rate. Plays a role in control of the cell cycle, stress response, ribosome biogenesis and in those bacteria that undergo differentiation, in morphogenesis control.</text>
</comment>
<comment type="cofactor">
    <cofactor evidence="1">
        <name>Mg(2+)</name>
        <dbReference type="ChEBI" id="CHEBI:18420"/>
    </cofactor>
</comment>
<comment type="subunit">
    <text evidence="1">Monomer.</text>
</comment>
<comment type="subcellular location">
    <subcellularLocation>
        <location evidence="1">Cytoplasm</location>
    </subcellularLocation>
</comment>
<comment type="similarity">
    <text evidence="1">Belongs to the TRAFAC class OBG-HflX-like GTPase superfamily. OBG GTPase family.</text>
</comment>
<feature type="chain" id="PRO_0000385847" description="GTPase Obg">
    <location>
        <begin position="1"/>
        <end position="425"/>
    </location>
</feature>
<feature type="domain" description="Obg" evidence="3">
    <location>
        <begin position="1"/>
        <end position="158"/>
    </location>
</feature>
<feature type="domain" description="OBG-type G" evidence="1">
    <location>
        <begin position="159"/>
        <end position="330"/>
    </location>
</feature>
<feature type="domain" description="OCT" evidence="2">
    <location>
        <begin position="344"/>
        <end position="425"/>
    </location>
</feature>
<feature type="binding site" evidence="1">
    <location>
        <begin position="165"/>
        <end position="172"/>
    </location>
    <ligand>
        <name>GTP</name>
        <dbReference type="ChEBI" id="CHEBI:37565"/>
    </ligand>
</feature>
<feature type="binding site" evidence="1">
    <location>
        <position position="172"/>
    </location>
    <ligand>
        <name>Mg(2+)</name>
        <dbReference type="ChEBI" id="CHEBI:18420"/>
    </ligand>
</feature>
<feature type="binding site" evidence="1">
    <location>
        <begin position="190"/>
        <end position="194"/>
    </location>
    <ligand>
        <name>GTP</name>
        <dbReference type="ChEBI" id="CHEBI:37565"/>
    </ligand>
</feature>
<feature type="binding site" evidence="1">
    <location>
        <position position="192"/>
    </location>
    <ligand>
        <name>Mg(2+)</name>
        <dbReference type="ChEBI" id="CHEBI:18420"/>
    </ligand>
</feature>
<feature type="binding site" evidence="1">
    <location>
        <begin position="212"/>
        <end position="215"/>
    </location>
    <ligand>
        <name>GTP</name>
        <dbReference type="ChEBI" id="CHEBI:37565"/>
    </ligand>
</feature>
<feature type="binding site" evidence="1">
    <location>
        <begin position="282"/>
        <end position="285"/>
    </location>
    <ligand>
        <name>GTP</name>
        <dbReference type="ChEBI" id="CHEBI:37565"/>
    </ligand>
</feature>
<feature type="binding site" evidence="1">
    <location>
        <begin position="311"/>
        <end position="313"/>
    </location>
    <ligand>
        <name>GTP</name>
        <dbReference type="ChEBI" id="CHEBI:37565"/>
    </ligand>
</feature>
<evidence type="ECO:0000255" key="1">
    <source>
        <dbReference type="HAMAP-Rule" id="MF_01454"/>
    </source>
</evidence>
<evidence type="ECO:0000255" key="2">
    <source>
        <dbReference type="PROSITE-ProRule" id="PRU01229"/>
    </source>
</evidence>
<evidence type="ECO:0000255" key="3">
    <source>
        <dbReference type="PROSITE-ProRule" id="PRU01231"/>
    </source>
</evidence>
<gene>
    <name evidence="1" type="primary">obg</name>
    <name type="ordered locus">CD630_11640</name>
</gene>
<keyword id="KW-0963">Cytoplasm</keyword>
<keyword id="KW-0342">GTP-binding</keyword>
<keyword id="KW-0378">Hydrolase</keyword>
<keyword id="KW-0460">Magnesium</keyword>
<keyword id="KW-0479">Metal-binding</keyword>
<keyword id="KW-0547">Nucleotide-binding</keyword>
<keyword id="KW-1185">Reference proteome</keyword>
<name>OBG_CLOD6</name>